<name>NIRE_PARDP</name>
<dbReference type="EC" id="2.1.1.107"/>
<dbReference type="EMBL" id="U05002">
    <property type="protein sequence ID" value="AAA93119.1"/>
    <property type="molecule type" value="Genomic_DNA"/>
</dbReference>
<dbReference type="EMBL" id="CP000489">
    <property type="protein sequence ID" value="ABL70575.1"/>
    <property type="molecule type" value="Genomic_DNA"/>
</dbReference>
<dbReference type="RefSeq" id="WP_011748768.1">
    <property type="nucleotide sequence ID" value="NC_008686.1"/>
</dbReference>
<dbReference type="SMR" id="Q51701"/>
<dbReference type="STRING" id="318586.Pden_2488"/>
<dbReference type="EnsemblBacteria" id="ABL70575">
    <property type="protein sequence ID" value="ABL70575"/>
    <property type="gene ID" value="Pden_2488"/>
</dbReference>
<dbReference type="GeneID" id="93450881"/>
<dbReference type="KEGG" id="pde:Pden_2488"/>
<dbReference type="eggNOG" id="COG0007">
    <property type="taxonomic scope" value="Bacteria"/>
</dbReference>
<dbReference type="HOGENOM" id="CLU_011276_7_0_5"/>
<dbReference type="OrthoDB" id="9815856at2"/>
<dbReference type="UniPathway" id="UPA00262">
    <property type="reaction ID" value="UER00211"/>
</dbReference>
<dbReference type="Proteomes" id="UP000000361">
    <property type="component" value="Chromosome 1"/>
</dbReference>
<dbReference type="GO" id="GO:0004851">
    <property type="term" value="F:uroporphyrin-III C-methyltransferase activity"/>
    <property type="evidence" value="ECO:0007669"/>
    <property type="project" value="UniProtKB-EC"/>
</dbReference>
<dbReference type="GO" id="GO:0032259">
    <property type="term" value="P:methylation"/>
    <property type="evidence" value="ECO:0007669"/>
    <property type="project" value="UniProtKB-KW"/>
</dbReference>
<dbReference type="GO" id="GO:0019354">
    <property type="term" value="P:siroheme biosynthetic process"/>
    <property type="evidence" value="ECO:0007669"/>
    <property type="project" value="UniProtKB-UniPathway"/>
</dbReference>
<dbReference type="CDD" id="cd11642">
    <property type="entry name" value="SUMT"/>
    <property type="match status" value="1"/>
</dbReference>
<dbReference type="FunFam" id="3.40.1010.10:FF:000001">
    <property type="entry name" value="Siroheme synthase"/>
    <property type="match status" value="1"/>
</dbReference>
<dbReference type="Gene3D" id="3.40.1010.10">
    <property type="entry name" value="Cobalt-precorrin-4 Transmethylase, Domain 1"/>
    <property type="match status" value="1"/>
</dbReference>
<dbReference type="Gene3D" id="3.30.950.10">
    <property type="entry name" value="Methyltransferase, Cobalt-precorrin-4 Transmethylase, Domain 2"/>
    <property type="match status" value="1"/>
</dbReference>
<dbReference type="InterPro" id="IPR000878">
    <property type="entry name" value="4pyrrol_Mease"/>
</dbReference>
<dbReference type="InterPro" id="IPR035996">
    <property type="entry name" value="4pyrrol_Methylase_sf"/>
</dbReference>
<dbReference type="InterPro" id="IPR014777">
    <property type="entry name" value="4pyrrole_Mease_sub1"/>
</dbReference>
<dbReference type="InterPro" id="IPR014776">
    <property type="entry name" value="4pyrrole_Mease_sub2"/>
</dbReference>
<dbReference type="InterPro" id="IPR006366">
    <property type="entry name" value="CobA/CysG_C"/>
</dbReference>
<dbReference type="InterPro" id="IPR050161">
    <property type="entry name" value="Siro_Cobalamin_biosynth"/>
</dbReference>
<dbReference type="InterPro" id="IPR003043">
    <property type="entry name" value="Uropor_MeTrfase_CS"/>
</dbReference>
<dbReference type="NCBIfam" id="TIGR01469">
    <property type="entry name" value="cobA_cysG_Cterm"/>
    <property type="match status" value="1"/>
</dbReference>
<dbReference type="NCBIfam" id="NF004790">
    <property type="entry name" value="PRK06136.1"/>
    <property type="match status" value="1"/>
</dbReference>
<dbReference type="PANTHER" id="PTHR45790:SF3">
    <property type="entry name" value="S-ADENOSYL-L-METHIONINE-DEPENDENT UROPORPHYRINOGEN III METHYLTRANSFERASE, CHLOROPLASTIC"/>
    <property type="match status" value="1"/>
</dbReference>
<dbReference type="PANTHER" id="PTHR45790">
    <property type="entry name" value="SIROHEME SYNTHASE-RELATED"/>
    <property type="match status" value="1"/>
</dbReference>
<dbReference type="Pfam" id="PF00590">
    <property type="entry name" value="TP_methylase"/>
    <property type="match status" value="1"/>
</dbReference>
<dbReference type="SUPFAM" id="SSF53790">
    <property type="entry name" value="Tetrapyrrole methylase"/>
    <property type="match status" value="1"/>
</dbReference>
<dbReference type="PROSITE" id="PS00839">
    <property type="entry name" value="SUMT_1"/>
    <property type="match status" value="1"/>
</dbReference>
<dbReference type="PROSITE" id="PS00840">
    <property type="entry name" value="SUMT_2"/>
    <property type="match status" value="1"/>
</dbReference>
<keyword id="KW-0489">Methyltransferase</keyword>
<keyword id="KW-0627">Porphyrin biosynthesis</keyword>
<keyword id="KW-1185">Reference proteome</keyword>
<keyword id="KW-0949">S-adenosyl-L-methionine</keyword>
<keyword id="KW-0808">Transferase</keyword>
<proteinExistence type="inferred from homology"/>
<gene>
    <name type="primary">nirE</name>
    <name type="ordered locus">Pden_2488</name>
</gene>
<reference key="1">
    <citation type="journal article" date="1994" name="Antonie Van Leeuwenhoek">
        <title>Isolation, sequencing and mutational analysis of a gene cluster involved in nitrite reduction in Paracoccus denitrificans.</title>
        <authorList>
            <person name="de Boer A.P.N."/>
            <person name="Reijnders W.N.M."/>
            <person name="Kuenen J.G."/>
            <person name="Stouthamer A.H."/>
            <person name="van Spanning R.J.M."/>
        </authorList>
    </citation>
    <scope>NUCLEOTIDE SEQUENCE [GENOMIC DNA]</scope>
</reference>
<reference key="2">
    <citation type="submission" date="2006-12" db="EMBL/GenBank/DDBJ databases">
        <title>Complete sequence of chromosome 1 of Paracoccus denitrificans PD1222.</title>
        <authorList>
            <person name="Copeland A."/>
            <person name="Lucas S."/>
            <person name="Lapidus A."/>
            <person name="Barry K."/>
            <person name="Detter J.C."/>
            <person name="Glavina del Rio T."/>
            <person name="Hammon N."/>
            <person name="Israni S."/>
            <person name="Dalin E."/>
            <person name="Tice H."/>
            <person name="Pitluck S."/>
            <person name="Munk A.C."/>
            <person name="Brettin T."/>
            <person name="Bruce D."/>
            <person name="Han C."/>
            <person name="Tapia R."/>
            <person name="Gilna P."/>
            <person name="Schmutz J."/>
            <person name="Larimer F."/>
            <person name="Land M."/>
            <person name="Hauser L."/>
            <person name="Kyrpides N."/>
            <person name="Lykidis A."/>
            <person name="Spiro S."/>
            <person name="Richardson D.J."/>
            <person name="Moir J.W.B."/>
            <person name="Ferguson S.J."/>
            <person name="van Spanning R.J.M."/>
            <person name="Richardson P."/>
        </authorList>
    </citation>
    <scope>NUCLEOTIDE SEQUENCE [LARGE SCALE GENOMIC DNA]</scope>
    <source>
        <strain>Pd 1222</strain>
    </source>
</reference>
<evidence type="ECO:0000250" key="1"/>
<evidence type="ECO:0000256" key="2">
    <source>
        <dbReference type="SAM" id="MobiDB-lite"/>
    </source>
</evidence>
<evidence type="ECO:0000305" key="3"/>
<organism>
    <name type="scientific">Paracoccus denitrificans (strain Pd 1222)</name>
    <dbReference type="NCBI Taxonomy" id="318586"/>
    <lineage>
        <taxon>Bacteria</taxon>
        <taxon>Pseudomonadati</taxon>
        <taxon>Pseudomonadota</taxon>
        <taxon>Alphaproteobacteria</taxon>
        <taxon>Rhodobacterales</taxon>
        <taxon>Paracoccaceae</taxon>
        <taxon>Paracoccus</taxon>
    </lineage>
</organism>
<protein>
    <recommendedName>
        <fullName>Uroporphyrinogen-III C-methyltransferase</fullName>
        <shortName>Urogen III methylase</shortName>
        <ecNumber>2.1.1.107</ecNumber>
    </recommendedName>
    <alternativeName>
        <fullName>SUMT</fullName>
    </alternativeName>
    <alternativeName>
        <fullName>Uroporphyrinogen III methylase</fullName>
        <shortName>UROM</shortName>
    </alternativeName>
</protein>
<feature type="chain" id="PRO_0000150385" description="Uroporphyrinogen-III C-methyltransferase">
    <location>
        <begin position="1"/>
        <end position="287"/>
    </location>
</feature>
<feature type="region of interest" description="Disordered" evidence="2">
    <location>
        <begin position="1"/>
        <end position="24"/>
    </location>
</feature>
<feature type="compositionally biased region" description="Polar residues" evidence="2">
    <location>
        <begin position="1"/>
        <end position="10"/>
    </location>
</feature>
<feature type="binding site" evidence="1">
    <location>
        <position position="40"/>
    </location>
    <ligand>
        <name>S-adenosyl-L-methionine</name>
        <dbReference type="ChEBI" id="CHEBI:59789"/>
    </ligand>
</feature>
<feature type="binding site" evidence="1">
    <location>
        <begin position="116"/>
        <end position="118"/>
    </location>
    <ligand>
        <name>S-adenosyl-L-methionine</name>
        <dbReference type="ChEBI" id="CHEBI:59789"/>
    </ligand>
</feature>
<feature type="binding site" evidence="1">
    <location>
        <position position="146"/>
    </location>
    <ligand>
        <name>S-adenosyl-L-methionine</name>
        <dbReference type="ChEBI" id="CHEBI:59789"/>
    </ligand>
</feature>
<feature type="binding site" evidence="1">
    <location>
        <position position="199"/>
    </location>
    <ligand>
        <name>S-adenosyl-L-methionine</name>
        <dbReference type="ChEBI" id="CHEBI:59789"/>
    </ligand>
</feature>
<comment type="function">
    <text evidence="1">Catalyzes the methylation of both C-2 and C-7 of uroporphyrinogen III leading to precorrin-1 and precorrin-2; their oxidative esterification gives respectively factor I octamethyl ester and sirohydrochlorin (By similarity). Inactivation of uroporphyrinogen-III methyltransferase results in the loss of nitrite and nitric oxide reductase activities, but not of nitrous oxide reductase activity. Likely involved in heme D1 biosynthesis.</text>
</comment>
<comment type="catalytic activity">
    <reaction>
        <text>uroporphyrinogen III + 2 S-adenosyl-L-methionine = precorrin-2 + 2 S-adenosyl-L-homocysteine + H(+)</text>
        <dbReference type="Rhea" id="RHEA:32459"/>
        <dbReference type="ChEBI" id="CHEBI:15378"/>
        <dbReference type="ChEBI" id="CHEBI:57308"/>
        <dbReference type="ChEBI" id="CHEBI:57856"/>
        <dbReference type="ChEBI" id="CHEBI:58827"/>
        <dbReference type="ChEBI" id="CHEBI:59789"/>
        <dbReference type="EC" id="2.1.1.107"/>
    </reaction>
</comment>
<comment type="pathway">
    <text>Porphyrin-containing compound metabolism; siroheme biosynthesis; precorrin-2 from uroporphyrinogen III: step 1/1.</text>
</comment>
<comment type="similarity">
    <text evidence="3">Belongs to the precorrin methyltransferase family.</text>
</comment>
<sequence>MAGKTVTNGAAQGKAARSGADGAVRGKAGMGRVDLIGAGPGDPELLTLRALRLLQQADVVVHDRLVSDEVMACIPAHVRRIPVGKAAGFHPVPQEQINALLVELGLSGLTVARLKGGDPTIFGRGGEEFEAVTRAGIPCDYVPGITAAQGAAVSARFPLTHRGLATGLRHVTGHRARDAALDLDWASLADPQTTLAIYMGAANMAEIARELIRHGMPADLPVLAVSQASTPQEQRLHATLQDIAAALARKPLPAPVLFIVGHVAAMAEDCALPQELYRPEWRLVAHG</sequence>
<accession>Q51701</accession>
<accession>A1B4Y1</accession>